<organism>
    <name type="scientific">Schizosaccharomyces pombe (strain 972 / ATCC 24843)</name>
    <name type="common">Fission yeast</name>
    <dbReference type="NCBI Taxonomy" id="284812"/>
    <lineage>
        <taxon>Eukaryota</taxon>
        <taxon>Fungi</taxon>
        <taxon>Dikarya</taxon>
        <taxon>Ascomycota</taxon>
        <taxon>Taphrinomycotina</taxon>
        <taxon>Schizosaccharomycetes</taxon>
        <taxon>Schizosaccharomycetales</taxon>
        <taxon>Schizosaccharomycetaceae</taxon>
        <taxon>Schizosaccharomyces</taxon>
    </lineage>
</organism>
<comment type="function">
    <text evidence="3">Together with TRK2, defines the major, high-affinity potassium influx transport system. Involved in maintenance of the proper sodium/potassium ratio in the cell and in regulating the plasma membrane potential.</text>
</comment>
<comment type="subcellular location">
    <subcellularLocation>
        <location>Cell membrane</location>
        <topology>Multi-pass membrane protein</topology>
    </subcellularLocation>
</comment>
<comment type="similarity">
    <text evidence="4">Belongs to the TrkH potassium transport family.</text>
</comment>
<accession>P47946</accession>
<keyword id="KW-1003">Cell membrane</keyword>
<keyword id="KW-0325">Glycoprotein</keyword>
<keyword id="KW-0406">Ion transport</keyword>
<keyword id="KW-0472">Membrane</keyword>
<keyword id="KW-0630">Potassium</keyword>
<keyword id="KW-0633">Potassium transport</keyword>
<keyword id="KW-1185">Reference proteome</keyword>
<keyword id="KW-0812">Transmembrane</keyword>
<keyword id="KW-1133">Transmembrane helix</keyword>
<keyword id="KW-0813">Transport</keyword>
<evidence type="ECO:0000255" key="1"/>
<evidence type="ECO:0000256" key="2">
    <source>
        <dbReference type="SAM" id="MobiDB-lite"/>
    </source>
</evidence>
<evidence type="ECO:0000269" key="3">
    <source>
    </source>
</evidence>
<evidence type="ECO:0000305" key="4"/>
<proteinExistence type="inferred from homology"/>
<sequence>MVLNYIQRWFKWVIPTFGFLAIHYIYIISLTIIASILLFTGGTTTKIKYIDALFLASSATTQTGLNSVDLNSLSIWQQFILYGFTAITVPIWMHGSISFIRLYWFRRKFKDVVRQNRTRKFQRKLRKSLMKKSEDDEEQGVRGRKIRVMLPYLHSLRSPTSLKNFSRFDTHDSTNNPYFPDNPPSPKADISKDEYFGKYLPKKSDTLDMDLESHNMTFHDYEPSIENKNYDFGSSHSASMQMYEMDDLHPRLRRQSSFISSVNPLEADDTRETLSEGALVQESLPMAYSYSDTNLVVSRDSFTLTGDDNLFPEGGLRPANTIDGIVRSSLSSSSLSKDTEPSTVDMHIAFTGLNKPTIERERNLKLRKKSRFYKKSLRSRFSRGLHRPIRWTKSFTSNRRNLTLERVLSSAFAKKREPSISSRHTTMSLPYLSYNPTVDRNSAFVALSKEQRDELGGIEYRALKCVCSMVTLYFIIFNIAAFVTFIVFAYTAVGSREVIDSYDLRRGWWALFSSASSFNDLGFSLIPSSFVPMNRNIFLLLISSLFIIAGNTGFPCFFRTFIWTTYKLYPFSFEKKEAMAFLLDHPRRCFTLLFPSGATWVLFFVLLLLNVIDLVLFMVLDTGSKAVASLPKGIRVVNAIFQSVCTRTAGFTSVSISELHPAVLVSYMVMMYISVYPVAINMRNTNVYEERSLGVYRTEDDEGKSFLKDHLTEQLSYDLWYIFLGLFIICICEGGKISNPLDTDFSIFTVLFEVVSAYGTVGLSTGLSSSNCSLSARFTTISKLVIIALELRGRHRGLPRAVDRAILLPSEKNNLKEEEDYQRRHGFSIDNARGSIAVSRD</sequence>
<name>TRK1_SCHPO</name>
<dbReference type="EMBL" id="L36563">
    <property type="protein sequence ID" value="AAC41667.1"/>
    <property type="molecule type" value="Genomic_DNA"/>
</dbReference>
<dbReference type="EMBL" id="CU329670">
    <property type="protein sequence ID" value="CAA93300.1"/>
    <property type="molecule type" value="Genomic_DNA"/>
</dbReference>
<dbReference type="PIR" id="S50225">
    <property type="entry name" value="S50225"/>
</dbReference>
<dbReference type="PIR" id="T38703">
    <property type="entry name" value="T38703"/>
</dbReference>
<dbReference type="RefSeq" id="NP_593934.1">
    <property type="nucleotide sequence ID" value="NM_001019362.2"/>
</dbReference>
<dbReference type="SMR" id="P47946"/>
<dbReference type="BioGRID" id="279483">
    <property type="interactions" value="34"/>
</dbReference>
<dbReference type="FunCoup" id="P47946">
    <property type="interactions" value="86"/>
</dbReference>
<dbReference type="STRING" id="284812.P47946"/>
<dbReference type="GlyCosmos" id="P47946">
    <property type="glycosylation" value="5 sites, No reported glycans"/>
</dbReference>
<dbReference type="iPTMnet" id="P47946"/>
<dbReference type="SwissPalm" id="P47946"/>
<dbReference type="PaxDb" id="4896-SPAC3F10.02c.1"/>
<dbReference type="EnsemblFungi" id="SPAC3F10.02c.1">
    <property type="protein sequence ID" value="SPAC3F10.02c.1:pep"/>
    <property type="gene ID" value="SPAC3F10.02c"/>
</dbReference>
<dbReference type="GeneID" id="2543048"/>
<dbReference type="KEGG" id="spo:2543048"/>
<dbReference type="PomBase" id="SPAC3F10.02c">
    <property type="gene designation" value="trk1"/>
</dbReference>
<dbReference type="VEuPathDB" id="FungiDB:SPAC3F10.02c"/>
<dbReference type="eggNOG" id="KOG1341">
    <property type="taxonomic scope" value="Eukaryota"/>
</dbReference>
<dbReference type="HOGENOM" id="CLU_005947_0_1_1"/>
<dbReference type="InParanoid" id="P47946"/>
<dbReference type="OMA" id="RMTNDGI"/>
<dbReference type="PhylomeDB" id="P47946"/>
<dbReference type="PRO" id="PR:P47946"/>
<dbReference type="Proteomes" id="UP000002485">
    <property type="component" value="Chromosome I"/>
</dbReference>
<dbReference type="GO" id="GO:0032153">
    <property type="term" value="C:cell division site"/>
    <property type="evidence" value="ECO:0007005"/>
    <property type="project" value="PomBase"/>
</dbReference>
<dbReference type="GO" id="GO:0051286">
    <property type="term" value="C:cell tip"/>
    <property type="evidence" value="ECO:0007005"/>
    <property type="project" value="PomBase"/>
</dbReference>
<dbReference type="GO" id="GO:0005794">
    <property type="term" value="C:Golgi apparatus"/>
    <property type="evidence" value="ECO:0007005"/>
    <property type="project" value="PomBase"/>
</dbReference>
<dbReference type="GO" id="GO:0032178">
    <property type="term" value="C:medial membrane band"/>
    <property type="evidence" value="ECO:0000314"/>
    <property type="project" value="PomBase"/>
</dbReference>
<dbReference type="GO" id="GO:0005886">
    <property type="term" value="C:plasma membrane"/>
    <property type="evidence" value="ECO:0000318"/>
    <property type="project" value="GO_Central"/>
</dbReference>
<dbReference type="GO" id="GO:0031520">
    <property type="term" value="C:plasma membrane of cell tip"/>
    <property type="evidence" value="ECO:0000314"/>
    <property type="project" value="PomBase"/>
</dbReference>
<dbReference type="GO" id="GO:0140107">
    <property type="term" value="F:high-affinity potassium ion transmembrane transporter activity"/>
    <property type="evidence" value="ECO:0000316"/>
    <property type="project" value="PomBase"/>
</dbReference>
<dbReference type="GO" id="GO:0015079">
    <property type="term" value="F:potassium ion transmembrane transporter activity"/>
    <property type="evidence" value="ECO:0000314"/>
    <property type="project" value="PomBase"/>
</dbReference>
<dbReference type="GO" id="GO:0030007">
    <property type="term" value="P:intracellular potassium ion homeostasis"/>
    <property type="evidence" value="ECO:0000318"/>
    <property type="project" value="GO_Central"/>
</dbReference>
<dbReference type="GO" id="GO:1990573">
    <property type="term" value="P:potassium ion import across plasma membrane"/>
    <property type="evidence" value="ECO:0000314"/>
    <property type="project" value="PomBase"/>
</dbReference>
<dbReference type="GO" id="GO:0071805">
    <property type="term" value="P:potassium ion transmembrane transport"/>
    <property type="evidence" value="ECO:0000316"/>
    <property type="project" value="PomBase"/>
</dbReference>
<dbReference type="InterPro" id="IPR003445">
    <property type="entry name" value="Cat_transpt"/>
</dbReference>
<dbReference type="InterPro" id="IPR004773">
    <property type="entry name" value="K/Na_transp_Trk1/HKT1"/>
</dbReference>
<dbReference type="InterPro" id="IPR015958">
    <property type="entry name" value="Trk1_fungi"/>
</dbReference>
<dbReference type="InterPro" id="IPR051143">
    <property type="entry name" value="TrkH_K-transport"/>
</dbReference>
<dbReference type="NCBIfam" id="TIGR00934">
    <property type="entry name" value="2a38euk"/>
    <property type="match status" value="1"/>
</dbReference>
<dbReference type="PANTHER" id="PTHR31064:SF30">
    <property type="entry name" value="HIGH-AFFINITY POTASSIUM TRANSPORT PROTEIN-RELATED"/>
    <property type="match status" value="1"/>
</dbReference>
<dbReference type="PANTHER" id="PTHR31064">
    <property type="entry name" value="POTASSIUM TRANSPORT PROTEIN DDB_G0292412-RELATED"/>
    <property type="match status" value="1"/>
</dbReference>
<dbReference type="Pfam" id="PF02386">
    <property type="entry name" value="TrkH"/>
    <property type="match status" value="1"/>
</dbReference>
<dbReference type="PIRSF" id="PIRSF002450">
    <property type="entry name" value="K+_transpter_TRK"/>
    <property type="match status" value="1"/>
</dbReference>
<protein>
    <recommendedName>
        <fullName>Potassium transport protein 1</fullName>
    </recommendedName>
</protein>
<gene>
    <name type="primary">trk1</name>
    <name type="synonym">trk</name>
    <name type="ORF">SPAC3F10.02c</name>
</gene>
<reference key="1">
    <citation type="journal article" date="1995" name="Gene">
        <title>Isolation and characterization of SpTRK, a gene from Schizosaccharomyces pombe predicted to encode a K+ transporter protein.</title>
        <authorList>
            <person name="Soldatenkov V.A."/>
            <person name="Velasco J.A."/>
            <person name="Avila M.A."/>
            <person name="Dritschilo A."/>
            <person name="Notario V."/>
        </authorList>
    </citation>
    <scope>NUCLEOTIDE SEQUENCE [GENOMIC DNA]</scope>
</reference>
<reference key="2">
    <citation type="journal article" date="2002" name="Nature">
        <title>The genome sequence of Schizosaccharomyces pombe.</title>
        <authorList>
            <person name="Wood V."/>
            <person name="Gwilliam R."/>
            <person name="Rajandream M.A."/>
            <person name="Lyne M.H."/>
            <person name="Lyne R."/>
            <person name="Stewart A."/>
            <person name="Sgouros J.G."/>
            <person name="Peat N."/>
            <person name="Hayles J."/>
            <person name="Baker S.G."/>
            <person name="Basham D."/>
            <person name="Bowman S."/>
            <person name="Brooks K."/>
            <person name="Brown D."/>
            <person name="Brown S."/>
            <person name="Chillingworth T."/>
            <person name="Churcher C.M."/>
            <person name="Collins M."/>
            <person name="Connor R."/>
            <person name="Cronin A."/>
            <person name="Davis P."/>
            <person name="Feltwell T."/>
            <person name="Fraser A."/>
            <person name="Gentles S."/>
            <person name="Goble A."/>
            <person name="Hamlin N."/>
            <person name="Harris D.E."/>
            <person name="Hidalgo J."/>
            <person name="Hodgson G."/>
            <person name="Holroyd S."/>
            <person name="Hornsby T."/>
            <person name="Howarth S."/>
            <person name="Huckle E.J."/>
            <person name="Hunt S."/>
            <person name="Jagels K."/>
            <person name="James K.D."/>
            <person name="Jones L."/>
            <person name="Jones M."/>
            <person name="Leather S."/>
            <person name="McDonald S."/>
            <person name="McLean J."/>
            <person name="Mooney P."/>
            <person name="Moule S."/>
            <person name="Mungall K.L."/>
            <person name="Murphy L.D."/>
            <person name="Niblett D."/>
            <person name="Odell C."/>
            <person name="Oliver K."/>
            <person name="O'Neil S."/>
            <person name="Pearson D."/>
            <person name="Quail M.A."/>
            <person name="Rabbinowitsch E."/>
            <person name="Rutherford K.M."/>
            <person name="Rutter S."/>
            <person name="Saunders D."/>
            <person name="Seeger K."/>
            <person name="Sharp S."/>
            <person name="Skelton J."/>
            <person name="Simmonds M.N."/>
            <person name="Squares R."/>
            <person name="Squares S."/>
            <person name="Stevens K."/>
            <person name="Taylor K."/>
            <person name="Taylor R.G."/>
            <person name="Tivey A."/>
            <person name="Walsh S.V."/>
            <person name="Warren T."/>
            <person name="Whitehead S."/>
            <person name="Woodward J.R."/>
            <person name="Volckaert G."/>
            <person name="Aert R."/>
            <person name="Robben J."/>
            <person name="Grymonprez B."/>
            <person name="Weltjens I."/>
            <person name="Vanstreels E."/>
            <person name="Rieger M."/>
            <person name="Schaefer M."/>
            <person name="Mueller-Auer S."/>
            <person name="Gabel C."/>
            <person name="Fuchs M."/>
            <person name="Duesterhoeft A."/>
            <person name="Fritzc C."/>
            <person name="Holzer E."/>
            <person name="Moestl D."/>
            <person name="Hilbert H."/>
            <person name="Borzym K."/>
            <person name="Langer I."/>
            <person name="Beck A."/>
            <person name="Lehrach H."/>
            <person name="Reinhardt R."/>
            <person name="Pohl T.M."/>
            <person name="Eger P."/>
            <person name="Zimmermann W."/>
            <person name="Wedler H."/>
            <person name="Wambutt R."/>
            <person name="Purnelle B."/>
            <person name="Goffeau A."/>
            <person name="Cadieu E."/>
            <person name="Dreano S."/>
            <person name="Gloux S."/>
            <person name="Lelaure V."/>
            <person name="Mottier S."/>
            <person name="Galibert F."/>
            <person name="Aves S.J."/>
            <person name="Xiang Z."/>
            <person name="Hunt C."/>
            <person name="Moore K."/>
            <person name="Hurst S.M."/>
            <person name="Lucas M."/>
            <person name="Rochet M."/>
            <person name="Gaillardin C."/>
            <person name="Tallada V.A."/>
            <person name="Garzon A."/>
            <person name="Thode G."/>
            <person name="Daga R.R."/>
            <person name="Cruzado L."/>
            <person name="Jimenez J."/>
            <person name="Sanchez M."/>
            <person name="del Rey F."/>
            <person name="Benito J."/>
            <person name="Dominguez A."/>
            <person name="Revuelta J.L."/>
            <person name="Moreno S."/>
            <person name="Armstrong J."/>
            <person name="Forsburg S.L."/>
            <person name="Cerutti L."/>
            <person name="Lowe T."/>
            <person name="McCombie W.R."/>
            <person name="Paulsen I."/>
            <person name="Potashkin J."/>
            <person name="Shpakovski G.V."/>
            <person name="Ussery D."/>
            <person name="Barrell B.G."/>
            <person name="Nurse P."/>
        </authorList>
    </citation>
    <scope>NUCLEOTIDE SEQUENCE [LARGE SCALE GENOMIC DNA]</scope>
    <source>
        <strain>972 / ATCC 24843</strain>
    </source>
</reference>
<reference key="3">
    <citation type="journal article" date="2000" name="J. Bacteriol.">
        <title>Trk1 and Trk2 define the major K(+) transport system in fission yeast.</title>
        <authorList>
            <person name="Calero F."/>
            <person name="Gomez N."/>
            <person name="Arino J."/>
            <person name="Ramos J."/>
        </authorList>
    </citation>
    <scope>FUNCTION</scope>
</reference>
<feature type="chain" id="PRO_0000070461" description="Potassium transport protein 1">
    <location>
        <begin position="1"/>
        <end position="841"/>
    </location>
</feature>
<feature type="transmembrane region" description="Helical" evidence="1">
    <location>
        <begin position="24"/>
        <end position="44"/>
    </location>
</feature>
<feature type="transmembrane region" description="Helical" evidence="1">
    <location>
        <begin position="80"/>
        <end position="100"/>
    </location>
</feature>
<feature type="transmembrane region" description="Helical" evidence="1">
    <location>
        <begin position="469"/>
        <end position="489"/>
    </location>
</feature>
<feature type="transmembrane region" description="Helical" evidence="1">
    <location>
        <begin position="507"/>
        <end position="527"/>
    </location>
</feature>
<feature type="transmembrane region" description="Helical" evidence="1">
    <location>
        <begin position="537"/>
        <end position="557"/>
    </location>
</feature>
<feature type="transmembrane region" description="Helical" evidence="1">
    <location>
        <begin position="600"/>
        <end position="620"/>
    </location>
</feature>
<feature type="transmembrane region" description="Helical" evidence="1">
    <location>
        <begin position="662"/>
        <end position="682"/>
    </location>
</feature>
<feature type="transmembrane region" description="Helical" evidence="1">
    <location>
        <begin position="715"/>
        <end position="735"/>
    </location>
</feature>
<feature type="transmembrane region" description="Helical" evidence="1">
    <location>
        <begin position="747"/>
        <end position="767"/>
    </location>
</feature>
<feature type="region of interest" description="Disordered" evidence="2">
    <location>
        <begin position="173"/>
        <end position="192"/>
    </location>
</feature>
<feature type="glycosylation site" description="N-linked (GlcNAc...) asparagine" evidence="1">
    <location>
        <position position="116"/>
    </location>
</feature>
<feature type="glycosylation site" description="N-linked (GlcNAc...) asparagine" evidence="1">
    <location>
        <position position="164"/>
    </location>
</feature>
<feature type="glycosylation site" description="N-linked (GlcNAc...) asparagine" evidence="1">
    <location>
        <position position="215"/>
    </location>
</feature>
<feature type="glycosylation site" description="N-linked (GlcNAc...) asparagine" evidence="1">
    <location>
        <position position="401"/>
    </location>
</feature>
<feature type="glycosylation site" description="N-linked (GlcNAc...) asparagine" evidence="1">
    <location>
        <position position="771"/>
    </location>
</feature>
<feature type="sequence conflict" description="In Ref. 1; AAC41667." evidence="4" ref="1">
    <original>LNYIQRWFKWVIPTFGFLAIHYIYI</original>
    <variation>QVGDTNFWIQGNSLYLH</variation>
    <location>
        <begin position="3"/>
        <end position="27"/>
    </location>
</feature>
<feature type="sequence conflict" description="In Ref. 1; AAC41667." evidence="4" ref="1">
    <original>I</original>
    <variation>V</variation>
    <location>
        <position position="36"/>
    </location>
</feature>
<feature type="sequence conflict" description="In Ref. 1; AAC41667." evidence="4" ref="1">
    <original>D</original>
    <variation>Y</variation>
    <location>
        <position position="269"/>
    </location>
</feature>
<feature type="sequence conflict" description="In Ref. 1; AAC41667." evidence="4" ref="1">
    <original>R</original>
    <variation>H</variation>
    <location>
        <position position="416"/>
    </location>
</feature>
<feature type="sequence conflict" description="In Ref. 1; AAC41667." evidence="4" ref="1">
    <original>T</original>
    <variation>I</variation>
    <location>
        <position position="471"/>
    </location>
</feature>
<feature type="sequence conflict" description="In Ref. 1; AAC41667." evidence="4" ref="1">
    <original>D</original>
    <variation>V</variation>
    <location>
        <position position="803"/>
    </location>
</feature>